<sequence>MKINNNFNIDSLIDNRDVAIVRGRKTDTFFKVFQVAPNIWIAPERYYGESLNINEDQKSDGGIYDSNFLSTNDEKDEFLQATVKILQRINNNVIGAKLLSLISTAIPFPYEYKPGDYRQTNYLVSKDNQHYYTANLVIFGPGTNIVENNAIYYKKEDSENGMGTMSEIWFQPFLTYKYGQFYVDPALELIKCLIKSLYYLYGIKPSDDLSIPYRLRSELNSFEYSELDMIDFLISGGTEYKLLDTNPYWFTDNYFIDAPKNFEKYKNDYETKIKNNNDIANSIKLYLEQKFKTNAQDIWELNLSYFSTEFEIMMPEIFNNALNHYYRKEYYVIDYFKNYNINGFINGQIKTILPLSKYNKNIINKPELVVNLINENNTVLMKSNVYGDGLKGTMDNFYAAYKIPYNIGDEYHINYSYLNNVNVEEINNIPPINDADIYPYRKNSDPFIPVYNITETKEINTTTPLSVNYLQAQVTNSNDISLSSDFSKVISSKDRSLVYSFLDNTIDYLDSIKYDEPIDTDKKYYLWLKEIFRNYSFDMTETQEVNTPCGINKVVPWLGKALNILNTGNSFIEEFKSLGPISLINKKENITMPKIEIDEIPNSMLNLSFKDLSENLFNRFSKNNSYFEKIYYDFLDQWWTQYYSQYFDLICMAKKSILAQETLIKKIIQKKLSYLIGNSNISSDNLALMNLTTTNTLRDISNESQIAMNNVDSFLNSAAICVFEGNIYSKFISFMEQCINNINKNTREFIQKCTNITENEKLQLINQNIFSSLDFDFLNIENLKSLFSSETALLIKEETSPYELVLYAFQEPDNNAIGDASAKNTSIEYSKDIDLVYGINSDALYLNGSNQSISFSNDFFENGLTNSFSIYFWLRNLGKDTIKSKLIGSKEDNCGWEIYFQDTGLVFNMIDSNGNEKNIYLSDVSNNSWHYITISVDRLKEQLLIFIDDNLVANESIKEILNIYSSNIISLLSENNPSYIEGLTILNKPTTSQEVLNNYFKVLNNSYIRDSNEERLEYNKTYQLYNYVFSDKPICEVKQNNNIYLTINNTNNLNLQPSKFKLLSINSNKQYVQKFDEVIISILGNMEKYIDISEDNRLQLIDNKNGAKKMIISNDMFISNCLTLSCGGKYICLSMKDENHNWMICNNDMSKYLYLWSFK</sequence>
<protein>
    <recommendedName>
        <fullName evidence="5">Non-toxic nonhemagglutinin type A</fullName>
        <shortName>NTNH</shortName>
    </recommendedName>
</protein>
<accession>C1FUH8</accession>
<accession>P71109</accession>
<dbReference type="EMBL" id="X87974">
    <property type="protein sequence ID" value="CAA61233.1"/>
    <property type="molecule type" value="Genomic_DNA"/>
</dbReference>
<dbReference type="EMBL" id="CP001581">
    <property type="protein sequence ID" value="ACO85717.1"/>
    <property type="molecule type" value="Genomic_DNA"/>
</dbReference>
<dbReference type="RefSeq" id="WP_012704905.1">
    <property type="nucleotide sequence ID" value="NC_012563.1"/>
</dbReference>
<dbReference type="PDB" id="9ARL">
    <property type="method" value="EM"/>
    <property type="resolution" value="4.00 A"/>
    <property type="chains" value="B=1-1159"/>
</dbReference>
<dbReference type="PDBsum" id="9ARL"/>
<dbReference type="SMR" id="C1FUH8"/>
<dbReference type="KEGG" id="cby:CLM_0896"/>
<dbReference type="eggNOG" id="ENOG5032C0W">
    <property type="taxonomic scope" value="Bacteria"/>
</dbReference>
<dbReference type="HOGENOM" id="CLU_262205_0_0_9"/>
<dbReference type="Proteomes" id="UP000001374">
    <property type="component" value="Chromosome"/>
</dbReference>
<dbReference type="GO" id="GO:0005576">
    <property type="term" value="C:extracellular region"/>
    <property type="evidence" value="ECO:0007669"/>
    <property type="project" value="InterPro"/>
</dbReference>
<dbReference type="GO" id="GO:0004222">
    <property type="term" value="F:metalloendopeptidase activity"/>
    <property type="evidence" value="ECO:0007669"/>
    <property type="project" value="UniProtKB-EC"/>
</dbReference>
<dbReference type="GO" id="GO:0008270">
    <property type="term" value="F:zinc ion binding"/>
    <property type="evidence" value="ECO:0007669"/>
    <property type="project" value="InterPro"/>
</dbReference>
<dbReference type="GO" id="GO:0006508">
    <property type="term" value="P:proteolysis"/>
    <property type="evidence" value="ECO:0007669"/>
    <property type="project" value="InterPro"/>
</dbReference>
<dbReference type="Gene3D" id="2.60.120.200">
    <property type="match status" value="1"/>
</dbReference>
<dbReference type="Gene3D" id="2.80.10.50">
    <property type="match status" value="1"/>
</dbReference>
<dbReference type="Gene3D" id="1.20.1120.10">
    <property type="entry name" value="Clostridium botulinum neurotoxin b, 'coiled-coil' domain"/>
    <property type="match status" value="1"/>
</dbReference>
<dbReference type="Gene3D" id="3.90.1240.10">
    <property type="entry name" value="Metalloproteases ('zincins'), catalytic domain like"/>
    <property type="match status" value="1"/>
</dbReference>
<dbReference type="InterPro" id="IPR000395">
    <property type="entry name" value="Bot/tetX_LC"/>
</dbReference>
<dbReference type="InterPro" id="IPR036248">
    <property type="entry name" value="Clostridium_toxin_transloc"/>
</dbReference>
<dbReference type="InterPro" id="IPR013320">
    <property type="entry name" value="ConA-like_dom_sf"/>
</dbReference>
<dbReference type="InterPro" id="IPR013677">
    <property type="entry name" value="Nontoxic_nonhemagglutn_C"/>
</dbReference>
<dbReference type="InterPro" id="IPR012928">
    <property type="entry name" value="Toxin_rcpt-bd_N"/>
</dbReference>
<dbReference type="NCBIfam" id="NF033911">
    <property type="entry name" value="botu_NTNH"/>
    <property type="match status" value="1"/>
</dbReference>
<dbReference type="Pfam" id="PF08470">
    <property type="entry name" value="NTNH_C"/>
    <property type="match status" value="1"/>
</dbReference>
<dbReference type="Pfam" id="PF01742">
    <property type="entry name" value="Peptidase_M27"/>
    <property type="match status" value="1"/>
</dbReference>
<dbReference type="Pfam" id="PF22133">
    <property type="entry name" value="Toxin_BN_H"/>
    <property type="match status" value="1"/>
</dbReference>
<dbReference type="Pfam" id="PF07953">
    <property type="entry name" value="Toxin_R_bind_N"/>
    <property type="match status" value="1"/>
</dbReference>
<dbReference type="PRINTS" id="PR00760">
    <property type="entry name" value="BONTOXILYSIN"/>
</dbReference>
<dbReference type="SUPFAM" id="SSF58091">
    <property type="entry name" value="Clostridium neurotoxins, 'coiled-coil' domain"/>
    <property type="match status" value="1"/>
</dbReference>
<dbReference type="SUPFAM" id="SSF49899">
    <property type="entry name" value="Concanavalin A-like lectins/glucanases"/>
    <property type="match status" value="1"/>
</dbReference>
<dbReference type="SUPFAM" id="SSF55486">
    <property type="entry name" value="Metalloproteases ('zincins'), catalytic domain"/>
    <property type="match status" value="1"/>
</dbReference>
<proteinExistence type="evidence at protein level"/>
<gene>
    <name evidence="5 8" type="primary">ntnh</name>
    <name evidence="8" type="ordered locus">CLM_0896</name>
</gene>
<feature type="chain" id="PRO_0000457880" description="Non-toxic nonhemagglutinin type A">
    <location>
        <begin position="1"/>
        <end position="1159"/>
    </location>
</feature>
<feature type="region of interest" description="Light chain nLC" evidence="1">
    <location>
        <begin position="1"/>
        <end position="375"/>
    </location>
</feature>
<feature type="region of interest" description="N-heavy chain nHN" evidence="1">
    <location>
        <begin position="376"/>
        <end position="795"/>
    </location>
</feature>
<feature type="region of interest" description="C-heavy chain nHC" evidence="1">
    <location>
        <begin position="796"/>
        <end position="1159"/>
    </location>
</feature>
<feature type="sequence conflict" description="In Ref. 1; CAA61233." evidence="6" ref="1">
    <original>S</original>
    <variation>Y</variation>
    <location>
        <position position="884"/>
    </location>
</feature>
<feature type="sequence conflict" description="In Ref. 1; CAA61233." evidence="6" ref="1">
    <original>N</original>
    <variation>K</variation>
    <location>
        <position position="976"/>
    </location>
</feature>
<feature type="sequence conflict" description="In Ref. 1; CAA61233." evidence="6" ref="1">
    <original>N</original>
    <variation>H</variation>
    <location>
        <position position="1019"/>
    </location>
</feature>
<feature type="sequence conflict" description="In Ref. 1; CAA61233." evidence="6" ref="1">
    <original>Y</original>
    <variation>D</variation>
    <location>
        <position position="1025"/>
    </location>
</feature>
<evidence type="ECO:0000250" key="1">
    <source>
        <dbReference type="UniProtKB" id="Q45914"/>
    </source>
</evidence>
<evidence type="ECO:0000269" key="2">
    <source>
    </source>
</evidence>
<evidence type="ECO:0000269" key="3">
    <source>
    </source>
</evidence>
<evidence type="ECO:0000269" key="4">
    <source>
    </source>
</evidence>
<evidence type="ECO:0000303" key="5">
    <source>
    </source>
</evidence>
<evidence type="ECO:0000305" key="6"/>
<evidence type="ECO:0000305" key="7">
    <source>
    </source>
</evidence>
<evidence type="ECO:0000312" key="8">
    <source>
        <dbReference type="EMBL" id="ACO85717.1"/>
    </source>
</evidence>
<evidence type="ECO:0000312" key="9">
    <source>
        <dbReference type="EMBL" id="CAA61233.1"/>
    </source>
</evidence>
<reference evidence="9" key="1">
    <citation type="journal article" date="1996" name="Int. J. Syst. Bacteriol.">
        <title>Organization and phylogenetic interrelationships of genes encoding components of the botulinum toxin complex in proteolytic Clostridium botulinum types A, B, and F: evidence of chimeric sequences in the gene encoding the nontoxic nonhemagglutinin component.</title>
        <authorList>
            <person name="East A.K."/>
            <person name="Bhandari M."/>
            <person name="Stacey J.M."/>
            <person name="Campbell K.D."/>
            <person name="Collins M.D."/>
        </authorList>
    </citation>
    <scope>NUCLEOTIDE SEQUENCE [GENOMIC DNA]</scope>
    <source>
        <strain>Kyoto / Type A2</strain>
    </source>
</reference>
<reference evidence="8" key="2">
    <citation type="submission" date="2008-10" db="EMBL/GenBank/DDBJ databases">
        <title>Genome sequence of Clostridium botulinum A2 Kyoto.</title>
        <authorList>
            <person name="Shrivastava S."/>
            <person name="Brinkac L.M."/>
            <person name="Brown J.L."/>
            <person name="Bruce D."/>
            <person name="Detter C.C."/>
            <person name="Johnson E.A."/>
            <person name="Munk C.A."/>
            <person name="Smith L.A."/>
            <person name="Smith T.J."/>
            <person name="Sutton G."/>
            <person name="Brettin T.S."/>
        </authorList>
    </citation>
    <scope>NUCLEOTIDE SEQUENCE [LARGE SCALE GENOMIC DNA]</scope>
    <source>
        <strain>Kyoto / Type A2</strain>
    </source>
</reference>
<reference key="3">
    <citation type="journal article" date="2004" name="FEMS Microbiol. Lett.">
        <title>Nucleotide sequence and transcriptional analysis of the type A2 neurotoxin gene cluster in Clostridium botulinum.</title>
        <authorList>
            <person name="Dineen S.S."/>
            <person name="Bradshaw M."/>
            <person name="Karasek C.E."/>
            <person name="Johnson E.A."/>
        </authorList>
    </citation>
    <scope>INDUCTION</scope>
    <scope>OPERON STRUCTURE</scope>
    <source>
        <strain>Kyoto / Type A2</strain>
    </source>
</reference>
<reference key="4">
    <citation type="journal article" date="2010" name="Appl. Environ. Microbiol.">
        <title>Expression of the Clostridium botulinum A2 neurotoxin gene cluster proteins and characterization of the A2 complex.</title>
        <authorList>
            <person name="Lin G."/>
            <person name="Tepp W.H."/>
            <person name="Pier C.L."/>
            <person name="Jacobson M.J."/>
            <person name="Johnson E.A."/>
        </authorList>
    </citation>
    <scope>SUBUNIT</scope>
    <scope>INDUCTION</scope>
    <source>
        <strain>Kyoto / Type A2</strain>
    </source>
</reference>
<reference key="5">
    <citation type="journal article" date="2017" name="FEBS Lett.">
        <title>Crystal structures of OrfX2 and P47 from a Botulinum neurotoxin OrfX-type gene cluster.</title>
        <authorList>
            <person name="Gustafsson R."/>
            <person name="Berntsson R.P."/>
            <person name="Martinez-Carranza M."/>
            <person name="El Tekle G."/>
            <person name="Odegrip R."/>
            <person name="Johnson E.A."/>
            <person name="Stenmark P."/>
        </authorList>
    </citation>
    <scope>PROBABLE FUNCTION</scope>
    <scope>SUBUNIT</scope>
    <source>
        <strain>Kyoto / Type A2</strain>
    </source>
</reference>
<name>BXAN_CLOBJ</name>
<keyword id="KW-0002">3D-structure</keyword>
<keyword id="KW-0843">Virulence</keyword>
<organism>
    <name type="scientific">Clostridium botulinum (strain Kyoto / Type A2)</name>
    <dbReference type="NCBI Taxonomy" id="536232"/>
    <lineage>
        <taxon>Bacteria</taxon>
        <taxon>Bacillati</taxon>
        <taxon>Bacillota</taxon>
        <taxon>Clostridia</taxon>
        <taxon>Eubacteriales</taxon>
        <taxon>Clostridiaceae</taxon>
        <taxon>Clostridium</taxon>
    </lineage>
</organism>
<comment type="function">
    <text evidence="7">Part of a botulinum neurotoxin type A2 (BoNT) locus; may be part of a progenitor toxin complex required to protect BoNT during its passage through the host gastrointestinal tract.</text>
</comment>
<comment type="subunit">
    <text evidence="3 4">Part of a crude toxin extract that includes BoNTA2/NTNH, P47, OrfX2 and OrfX3; OrfX1 was not detected. A purified toxin complex has NTNH and dichain BoNTA2 (PubMed:19915042). Forms a highly interlocked heterodimer with botulinum neurotoxin type A2 at pH 6.0, called the minimally functional progenitor toxin complex (M-PTC) (BoNT/A, botA) (PubMed:29067689).</text>
</comment>
<comment type="induction">
    <text evidence="2 3">The toxin locus has divergently transcribed operons maximally expressed during early stationary phase. This is part of the p47-ntnh-botA operon (PubMed:15158256). The crude toxin extract was isolated from cells that had been growing statically for 96 hours (at protein level) (PubMed:19915042).</text>
</comment>
<comment type="domain">
    <text evidence="1">Has 3 domains that are structurally very similar to those in BoNT/A; light chain (nLC, equivalent to the light chain), N-heavy chain (nHN) and C-heavy chain (nHC).</text>
</comment>
<comment type="PTM">
    <text evidence="3">Shorter forms of this protein are seen in vivo.</text>
</comment>
<comment type="similarity">
    <text evidence="6">Belongs to the botulism non-toxic nonhemagglutinin family.</text>
</comment>